<sequence>MAGAKEIRSKIASVQNTQKITKAMEMVAASKMRKSQERMAASRPYAETMRSVIGHLALGNLEYKHPYLEERDVKRVGYLVVSTDRGLCGGLNINLFKRLLAEMKGWSEKGVECDLALIGSKAASFFGSVGGKIVAQVTGMGDNPSLSELIGPVKVMLQAYDEGRLDKLYIVNNKFINTMSQEPRIMQLLPLPPAEDGELKKKSWDYLYEPDPKALLDTLLRRYVESQVYQGVVENLASEQAARMVAMKAATDNGGSLIKELQLVYNKARQASITQELTEIVGGASAV</sequence>
<comment type="function">
    <text evidence="1">Produces ATP from ADP in the presence of a proton gradient across the membrane. The gamma chain is believed to be important in regulating ATPase activity and the flow of protons through the CF(0) complex.</text>
</comment>
<comment type="subunit">
    <text evidence="1">F-type ATPases have 2 components, CF(1) - the catalytic core - and CF(0) - the membrane proton channel. CF(1) has five subunits: alpha(3), beta(3), gamma(1), delta(1), epsilon(1). CF(0) has three main subunits: a, b and c.</text>
</comment>
<comment type="subcellular location">
    <subcellularLocation>
        <location evidence="1">Cell inner membrane</location>
        <topology evidence="1">Peripheral membrane protein</topology>
    </subcellularLocation>
</comment>
<comment type="similarity">
    <text evidence="1">Belongs to the ATPase gamma chain family.</text>
</comment>
<dbReference type="EMBL" id="AL590842">
    <property type="protein sequence ID" value="CAL22690.1"/>
    <property type="molecule type" value="Genomic_DNA"/>
</dbReference>
<dbReference type="EMBL" id="AE009952">
    <property type="protein sequence ID" value="AAM87678.1"/>
    <property type="molecule type" value="Genomic_DNA"/>
</dbReference>
<dbReference type="EMBL" id="AE017042">
    <property type="protein sequence ID" value="AAS64168.1"/>
    <property type="molecule type" value="Genomic_DNA"/>
</dbReference>
<dbReference type="PIR" id="AF0500">
    <property type="entry name" value="AF0500"/>
</dbReference>
<dbReference type="RefSeq" id="WP_002220756.1">
    <property type="nucleotide sequence ID" value="NZ_WUCM01000028.1"/>
</dbReference>
<dbReference type="RefSeq" id="YP_002348973.1">
    <property type="nucleotide sequence ID" value="NC_003143.1"/>
</dbReference>
<dbReference type="SMR" id="Q8Z9S5"/>
<dbReference type="STRING" id="214092.YPO4122"/>
<dbReference type="PaxDb" id="214092-YPO4122"/>
<dbReference type="DNASU" id="1149083"/>
<dbReference type="EnsemblBacteria" id="AAS64168">
    <property type="protein sequence ID" value="AAS64168"/>
    <property type="gene ID" value="YP_4029"/>
</dbReference>
<dbReference type="GeneID" id="96663460"/>
<dbReference type="KEGG" id="ype:YPO4122"/>
<dbReference type="KEGG" id="ypk:y4136"/>
<dbReference type="KEGG" id="ypm:YP_4029"/>
<dbReference type="PATRIC" id="fig|214092.21.peg.4666"/>
<dbReference type="eggNOG" id="COG0224">
    <property type="taxonomic scope" value="Bacteria"/>
</dbReference>
<dbReference type="HOGENOM" id="CLU_050669_0_1_6"/>
<dbReference type="OMA" id="MQITSAM"/>
<dbReference type="OrthoDB" id="9812769at2"/>
<dbReference type="Proteomes" id="UP000000815">
    <property type="component" value="Chromosome"/>
</dbReference>
<dbReference type="Proteomes" id="UP000001019">
    <property type="component" value="Chromosome"/>
</dbReference>
<dbReference type="Proteomes" id="UP000002490">
    <property type="component" value="Chromosome"/>
</dbReference>
<dbReference type="GO" id="GO:0005886">
    <property type="term" value="C:plasma membrane"/>
    <property type="evidence" value="ECO:0007669"/>
    <property type="project" value="UniProtKB-SubCell"/>
</dbReference>
<dbReference type="GO" id="GO:0045259">
    <property type="term" value="C:proton-transporting ATP synthase complex"/>
    <property type="evidence" value="ECO:0007669"/>
    <property type="project" value="UniProtKB-KW"/>
</dbReference>
<dbReference type="GO" id="GO:0005524">
    <property type="term" value="F:ATP binding"/>
    <property type="evidence" value="ECO:0007669"/>
    <property type="project" value="UniProtKB-UniRule"/>
</dbReference>
<dbReference type="GO" id="GO:0046933">
    <property type="term" value="F:proton-transporting ATP synthase activity, rotational mechanism"/>
    <property type="evidence" value="ECO:0007669"/>
    <property type="project" value="UniProtKB-UniRule"/>
</dbReference>
<dbReference type="GO" id="GO:0015986">
    <property type="term" value="P:proton motive force-driven ATP synthesis"/>
    <property type="evidence" value="ECO:0000318"/>
    <property type="project" value="GO_Central"/>
</dbReference>
<dbReference type="GO" id="GO:0042777">
    <property type="term" value="P:proton motive force-driven plasma membrane ATP synthesis"/>
    <property type="evidence" value="ECO:0007669"/>
    <property type="project" value="UniProtKB-UniRule"/>
</dbReference>
<dbReference type="CDD" id="cd12151">
    <property type="entry name" value="F1-ATPase_gamma"/>
    <property type="match status" value="1"/>
</dbReference>
<dbReference type="FunFam" id="1.10.287.80:FF:000005">
    <property type="entry name" value="ATP synthase gamma chain"/>
    <property type="match status" value="2"/>
</dbReference>
<dbReference type="FunFam" id="3.40.1380.10:FF:000001">
    <property type="entry name" value="ATP synthase gamma chain"/>
    <property type="match status" value="1"/>
</dbReference>
<dbReference type="Gene3D" id="3.40.1380.10">
    <property type="match status" value="1"/>
</dbReference>
<dbReference type="Gene3D" id="1.10.287.80">
    <property type="entry name" value="ATP synthase, gamma subunit, helix hairpin domain"/>
    <property type="match status" value="1"/>
</dbReference>
<dbReference type="HAMAP" id="MF_00815">
    <property type="entry name" value="ATP_synth_gamma_bact"/>
    <property type="match status" value="1"/>
</dbReference>
<dbReference type="InterPro" id="IPR035968">
    <property type="entry name" value="ATP_synth_F1_ATPase_gsu"/>
</dbReference>
<dbReference type="InterPro" id="IPR000131">
    <property type="entry name" value="ATP_synth_F1_gsu"/>
</dbReference>
<dbReference type="InterPro" id="IPR023632">
    <property type="entry name" value="ATP_synth_F1_gsu_CS"/>
</dbReference>
<dbReference type="NCBIfam" id="TIGR01146">
    <property type="entry name" value="ATPsyn_F1gamma"/>
    <property type="match status" value="1"/>
</dbReference>
<dbReference type="NCBIfam" id="NF004144">
    <property type="entry name" value="PRK05621.1-1"/>
    <property type="match status" value="1"/>
</dbReference>
<dbReference type="PANTHER" id="PTHR11693">
    <property type="entry name" value="ATP SYNTHASE GAMMA CHAIN"/>
    <property type="match status" value="1"/>
</dbReference>
<dbReference type="PANTHER" id="PTHR11693:SF22">
    <property type="entry name" value="ATP SYNTHASE SUBUNIT GAMMA, MITOCHONDRIAL"/>
    <property type="match status" value="1"/>
</dbReference>
<dbReference type="Pfam" id="PF00231">
    <property type="entry name" value="ATP-synt"/>
    <property type="match status" value="1"/>
</dbReference>
<dbReference type="PRINTS" id="PR00126">
    <property type="entry name" value="ATPASEGAMMA"/>
</dbReference>
<dbReference type="SUPFAM" id="SSF52943">
    <property type="entry name" value="ATP synthase (F1-ATPase), gamma subunit"/>
    <property type="match status" value="1"/>
</dbReference>
<dbReference type="PROSITE" id="PS00153">
    <property type="entry name" value="ATPASE_GAMMA"/>
    <property type="match status" value="1"/>
</dbReference>
<feature type="chain" id="PRO_0000073426" description="ATP synthase gamma chain">
    <location>
        <begin position="1"/>
        <end position="287"/>
    </location>
</feature>
<reference key="1">
    <citation type="journal article" date="2001" name="Nature">
        <title>Genome sequence of Yersinia pestis, the causative agent of plague.</title>
        <authorList>
            <person name="Parkhill J."/>
            <person name="Wren B.W."/>
            <person name="Thomson N.R."/>
            <person name="Titball R.W."/>
            <person name="Holden M.T.G."/>
            <person name="Prentice M.B."/>
            <person name="Sebaihia M."/>
            <person name="James K.D."/>
            <person name="Churcher C.M."/>
            <person name="Mungall K.L."/>
            <person name="Baker S."/>
            <person name="Basham D."/>
            <person name="Bentley S.D."/>
            <person name="Brooks K."/>
            <person name="Cerdeno-Tarraga A.-M."/>
            <person name="Chillingworth T."/>
            <person name="Cronin A."/>
            <person name="Davies R.M."/>
            <person name="Davis P."/>
            <person name="Dougan G."/>
            <person name="Feltwell T."/>
            <person name="Hamlin N."/>
            <person name="Holroyd S."/>
            <person name="Jagels K."/>
            <person name="Karlyshev A.V."/>
            <person name="Leather S."/>
            <person name="Moule S."/>
            <person name="Oyston P.C.F."/>
            <person name="Quail M.A."/>
            <person name="Rutherford K.M."/>
            <person name="Simmonds M."/>
            <person name="Skelton J."/>
            <person name="Stevens K."/>
            <person name="Whitehead S."/>
            <person name="Barrell B.G."/>
        </authorList>
    </citation>
    <scope>NUCLEOTIDE SEQUENCE [LARGE SCALE GENOMIC DNA]</scope>
    <source>
        <strain>CO-92 / Biovar Orientalis</strain>
    </source>
</reference>
<reference key="2">
    <citation type="journal article" date="2002" name="J. Bacteriol.">
        <title>Genome sequence of Yersinia pestis KIM.</title>
        <authorList>
            <person name="Deng W."/>
            <person name="Burland V."/>
            <person name="Plunkett G. III"/>
            <person name="Boutin A."/>
            <person name="Mayhew G.F."/>
            <person name="Liss P."/>
            <person name="Perna N.T."/>
            <person name="Rose D.J."/>
            <person name="Mau B."/>
            <person name="Zhou S."/>
            <person name="Schwartz D.C."/>
            <person name="Fetherston J.D."/>
            <person name="Lindler L.E."/>
            <person name="Brubaker R.R."/>
            <person name="Plano G.V."/>
            <person name="Straley S.C."/>
            <person name="McDonough K.A."/>
            <person name="Nilles M.L."/>
            <person name="Matson J.S."/>
            <person name="Blattner F.R."/>
            <person name="Perry R.D."/>
        </authorList>
    </citation>
    <scope>NUCLEOTIDE SEQUENCE [LARGE SCALE GENOMIC DNA]</scope>
    <source>
        <strain>KIM10+ / Biovar Mediaevalis</strain>
    </source>
</reference>
<reference key="3">
    <citation type="journal article" date="2004" name="DNA Res.">
        <title>Complete genome sequence of Yersinia pestis strain 91001, an isolate avirulent to humans.</title>
        <authorList>
            <person name="Song Y."/>
            <person name="Tong Z."/>
            <person name="Wang J."/>
            <person name="Wang L."/>
            <person name="Guo Z."/>
            <person name="Han Y."/>
            <person name="Zhang J."/>
            <person name="Pei D."/>
            <person name="Zhou D."/>
            <person name="Qin H."/>
            <person name="Pang X."/>
            <person name="Han Y."/>
            <person name="Zhai J."/>
            <person name="Li M."/>
            <person name="Cui B."/>
            <person name="Qi Z."/>
            <person name="Jin L."/>
            <person name="Dai R."/>
            <person name="Chen F."/>
            <person name="Li S."/>
            <person name="Ye C."/>
            <person name="Du Z."/>
            <person name="Lin W."/>
            <person name="Wang J."/>
            <person name="Yu J."/>
            <person name="Yang H."/>
            <person name="Wang J."/>
            <person name="Huang P."/>
            <person name="Yang R."/>
        </authorList>
    </citation>
    <scope>NUCLEOTIDE SEQUENCE [LARGE SCALE GENOMIC DNA]</scope>
    <source>
        <strain>91001 / Biovar Mediaevalis</strain>
    </source>
</reference>
<proteinExistence type="inferred from homology"/>
<organism>
    <name type="scientific">Yersinia pestis</name>
    <dbReference type="NCBI Taxonomy" id="632"/>
    <lineage>
        <taxon>Bacteria</taxon>
        <taxon>Pseudomonadati</taxon>
        <taxon>Pseudomonadota</taxon>
        <taxon>Gammaproteobacteria</taxon>
        <taxon>Enterobacterales</taxon>
        <taxon>Yersiniaceae</taxon>
        <taxon>Yersinia</taxon>
    </lineage>
</organism>
<accession>Q8Z9S5</accession>
<accession>Q0W9R5</accession>
<accession>Q74PA0</accession>
<accession>Q7CFM7</accession>
<evidence type="ECO:0000255" key="1">
    <source>
        <dbReference type="HAMAP-Rule" id="MF_00815"/>
    </source>
</evidence>
<name>ATPG_YERPE</name>
<keyword id="KW-0066">ATP synthesis</keyword>
<keyword id="KW-0997">Cell inner membrane</keyword>
<keyword id="KW-1003">Cell membrane</keyword>
<keyword id="KW-0139">CF(1)</keyword>
<keyword id="KW-0375">Hydrogen ion transport</keyword>
<keyword id="KW-0406">Ion transport</keyword>
<keyword id="KW-0472">Membrane</keyword>
<keyword id="KW-1185">Reference proteome</keyword>
<keyword id="KW-0813">Transport</keyword>
<protein>
    <recommendedName>
        <fullName evidence="1">ATP synthase gamma chain</fullName>
    </recommendedName>
    <alternativeName>
        <fullName evidence="1">ATP synthase F1 sector gamma subunit</fullName>
    </alternativeName>
    <alternativeName>
        <fullName evidence="1">F-ATPase gamma subunit</fullName>
    </alternativeName>
</protein>
<gene>
    <name evidence="1" type="primary">atpG</name>
    <name type="ordered locus">YPO4122</name>
    <name type="ordered locus">y4136</name>
    <name type="ordered locus">YP_4029</name>
</gene>